<organism>
    <name type="scientific">Bartonella tribocorum (strain CIP 105476 / IBS 506)</name>
    <dbReference type="NCBI Taxonomy" id="382640"/>
    <lineage>
        <taxon>Bacteria</taxon>
        <taxon>Pseudomonadati</taxon>
        <taxon>Pseudomonadota</taxon>
        <taxon>Alphaproteobacteria</taxon>
        <taxon>Hyphomicrobiales</taxon>
        <taxon>Bartonellaceae</taxon>
        <taxon>Bartonella</taxon>
    </lineage>
</organism>
<sequence>MSLTIAIVGRPNVGKSTLFNRLVGQKLALVDDKPGVTRDRRIHAAKLQDLRFDVIDTAGLEEAGDHTLEGRMRSQTKAAIDEADLILFVFDAKSGITPSDLNFASLVRKSGKPIVLVANKSESKAATGGEYEAWSLGLGEPCPISAEHGLGLSDLRDAIIDAVGSERAFSNNKEEDMTIQPASVGDDIEDLQEEGLIYDESKPIRIAIAGRPNTGKSTLINSMLKQDRLLTGPEAGLTRDSISVDWEWRGRHIKLFDTAGLRRKSKIQEKLEKLSVADTLRAIRFAEVVVIVFDATMPFEKQDLQIADLVIREGRVPVIAFNKWDLIENSQATLIDLHEKCARFLPQVRGLRAVPLSGQYGQGIDKLMENIMMMHRVWNRRISTAKLNQWLEIVVAHHPPPAISGRRLKVKYITQVKTRPPGFMISCSRPKVMPQSYLRYLVNGLRETFDMSGIPVRLSLRASDNPFATRAKKK</sequence>
<keyword id="KW-0342">GTP-binding</keyword>
<keyword id="KW-0547">Nucleotide-binding</keyword>
<keyword id="KW-0677">Repeat</keyword>
<keyword id="KW-0690">Ribosome biogenesis</keyword>
<comment type="function">
    <text evidence="1">GTPase that plays an essential role in the late steps of ribosome biogenesis.</text>
</comment>
<comment type="subunit">
    <text evidence="1">Associates with the 50S ribosomal subunit.</text>
</comment>
<comment type="similarity">
    <text evidence="1">Belongs to the TRAFAC class TrmE-Era-EngA-EngB-Septin-like GTPase superfamily. EngA (Der) GTPase family.</text>
</comment>
<protein>
    <recommendedName>
        <fullName evidence="1">GTPase Der</fullName>
    </recommendedName>
    <alternativeName>
        <fullName evidence="1">GTP-binding protein EngA</fullName>
    </alternativeName>
</protein>
<evidence type="ECO:0000255" key="1">
    <source>
        <dbReference type="HAMAP-Rule" id="MF_00195"/>
    </source>
</evidence>
<accession>A9IQH4</accession>
<reference key="1">
    <citation type="journal article" date="2007" name="Nat. Genet.">
        <title>Genomic analysis of Bartonella identifies type IV secretion systems as host adaptability factors.</title>
        <authorList>
            <person name="Saenz H.L."/>
            <person name="Engel P."/>
            <person name="Stoeckli M.C."/>
            <person name="Lanz C."/>
            <person name="Raddatz G."/>
            <person name="Vayssier-Taussat M."/>
            <person name="Birtles R."/>
            <person name="Schuster S.C."/>
            <person name="Dehio C."/>
        </authorList>
    </citation>
    <scope>NUCLEOTIDE SEQUENCE [LARGE SCALE GENOMIC DNA]</scope>
    <source>
        <strain>CIP 105476 / IBS 506</strain>
    </source>
</reference>
<name>DER_BART1</name>
<gene>
    <name evidence="1" type="primary">der</name>
    <name type="synonym">engA</name>
    <name type="ordered locus">BT_0619</name>
</gene>
<feature type="chain" id="PRO_1000077648" description="GTPase Der">
    <location>
        <begin position="1"/>
        <end position="474"/>
    </location>
</feature>
<feature type="domain" description="EngA-type G 1">
    <location>
        <begin position="3"/>
        <end position="167"/>
    </location>
</feature>
<feature type="domain" description="EngA-type G 2">
    <location>
        <begin position="204"/>
        <end position="379"/>
    </location>
</feature>
<feature type="domain" description="KH-like" evidence="1">
    <location>
        <begin position="380"/>
        <end position="464"/>
    </location>
</feature>
<feature type="binding site" evidence="1">
    <location>
        <begin position="9"/>
        <end position="16"/>
    </location>
    <ligand>
        <name>GTP</name>
        <dbReference type="ChEBI" id="CHEBI:37565"/>
        <label>1</label>
    </ligand>
</feature>
<feature type="binding site" evidence="1">
    <location>
        <begin position="56"/>
        <end position="60"/>
    </location>
    <ligand>
        <name>GTP</name>
        <dbReference type="ChEBI" id="CHEBI:37565"/>
        <label>1</label>
    </ligand>
</feature>
<feature type="binding site" evidence="1">
    <location>
        <begin position="119"/>
        <end position="122"/>
    </location>
    <ligand>
        <name>GTP</name>
        <dbReference type="ChEBI" id="CHEBI:37565"/>
        <label>1</label>
    </ligand>
</feature>
<feature type="binding site" evidence="1">
    <location>
        <begin position="210"/>
        <end position="217"/>
    </location>
    <ligand>
        <name>GTP</name>
        <dbReference type="ChEBI" id="CHEBI:37565"/>
        <label>2</label>
    </ligand>
</feature>
<feature type="binding site" evidence="1">
    <location>
        <begin position="257"/>
        <end position="261"/>
    </location>
    <ligand>
        <name>GTP</name>
        <dbReference type="ChEBI" id="CHEBI:37565"/>
        <label>2</label>
    </ligand>
</feature>
<feature type="binding site" evidence="1">
    <location>
        <begin position="322"/>
        <end position="325"/>
    </location>
    <ligand>
        <name>GTP</name>
        <dbReference type="ChEBI" id="CHEBI:37565"/>
        <label>2</label>
    </ligand>
</feature>
<proteinExistence type="inferred from homology"/>
<dbReference type="EMBL" id="AM260525">
    <property type="protein sequence ID" value="CAK01058.1"/>
    <property type="molecule type" value="Genomic_DNA"/>
</dbReference>
<dbReference type="RefSeq" id="WP_012231164.1">
    <property type="nucleotide sequence ID" value="NC_010161.1"/>
</dbReference>
<dbReference type="SMR" id="A9IQH4"/>
<dbReference type="KEGG" id="btr:BT_0619"/>
<dbReference type="eggNOG" id="COG1160">
    <property type="taxonomic scope" value="Bacteria"/>
</dbReference>
<dbReference type="HOGENOM" id="CLU_016077_5_0_5"/>
<dbReference type="Proteomes" id="UP000001592">
    <property type="component" value="Chromosome"/>
</dbReference>
<dbReference type="GO" id="GO:0005525">
    <property type="term" value="F:GTP binding"/>
    <property type="evidence" value="ECO:0007669"/>
    <property type="project" value="UniProtKB-UniRule"/>
</dbReference>
<dbReference type="GO" id="GO:0042254">
    <property type="term" value="P:ribosome biogenesis"/>
    <property type="evidence" value="ECO:0007669"/>
    <property type="project" value="UniProtKB-KW"/>
</dbReference>
<dbReference type="CDD" id="cd01894">
    <property type="entry name" value="EngA1"/>
    <property type="match status" value="1"/>
</dbReference>
<dbReference type="CDD" id="cd01895">
    <property type="entry name" value="EngA2"/>
    <property type="match status" value="1"/>
</dbReference>
<dbReference type="FunFam" id="3.30.300.20:FF:000004">
    <property type="entry name" value="GTPase Der"/>
    <property type="match status" value="1"/>
</dbReference>
<dbReference type="FunFam" id="3.40.50.300:FF:000057">
    <property type="entry name" value="GTPase Der"/>
    <property type="match status" value="1"/>
</dbReference>
<dbReference type="Gene3D" id="3.30.300.20">
    <property type="match status" value="1"/>
</dbReference>
<dbReference type="Gene3D" id="3.40.50.300">
    <property type="entry name" value="P-loop containing nucleotide triphosphate hydrolases"/>
    <property type="match status" value="2"/>
</dbReference>
<dbReference type="HAMAP" id="MF_00195">
    <property type="entry name" value="GTPase_Der"/>
    <property type="match status" value="1"/>
</dbReference>
<dbReference type="InterPro" id="IPR031166">
    <property type="entry name" value="G_ENGA"/>
</dbReference>
<dbReference type="InterPro" id="IPR006073">
    <property type="entry name" value="GTP-bd"/>
</dbReference>
<dbReference type="InterPro" id="IPR016484">
    <property type="entry name" value="GTPase_Der"/>
</dbReference>
<dbReference type="InterPro" id="IPR032859">
    <property type="entry name" value="KH_dom-like"/>
</dbReference>
<dbReference type="InterPro" id="IPR015946">
    <property type="entry name" value="KH_dom-like_a/b"/>
</dbReference>
<dbReference type="InterPro" id="IPR027417">
    <property type="entry name" value="P-loop_NTPase"/>
</dbReference>
<dbReference type="InterPro" id="IPR005225">
    <property type="entry name" value="Small_GTP-bd"/>
</dbReference>
<dbReference type="NCBIfam" id="TIGR03594">
    <property type="entry name" value="GTPase_EngA"/>
    <property type="match status" value="1"/>
</dbReference>
<dbReference type="NCBIfam" id="TIGR00231">
    <property type="entry name" value="small_GTP"/>
    <property type="match status" value="2"/>
</dbReference>
<dbReference type="PANTHER" id="PTHR43834">
    <property type="entry name" value="GTPASE DER"/>
    <property type="match status" value="1"/>
</dbReference>
<dbReference type="PANTHER" id="PTHR43834:SF6">
    <property type="entry name" value="GTPASE DER"/>
    <property type="match status" value="1"/>
</dbReference>
<dbReference type="Pfam" id="PF14714">
    <property type="entry name" value="KH_dom-like"/>
    <property type="match status" value="1"/>
</dbReference>
<dbReference type="Pfam" id="PF01926">
    <property type="entry name" value="MMR_HSR1"/>
    <property type="match status" value="2"/>
</dbReference>
<dbReference type="PIRSF" id="PIRSF006485">
    <property type="entry name" value="GTP-binding_EngA"/>
    <property type="match status" value="1"/>
</dbReference>
<dbReference type="PRINTS" id="PR00326">
    <property type="entry name" value="GTP1OBG"/>
</dbReference>
<dbReference type="SUPFAM" id="SSF52540">
    <property type="entry name" value="P-loop containing nucleoside triphosphate hydrolases"/>
    <property type="match status" value="2"/>
</dbReference>
<dbReference type="PROSITE" id="PS51712">
    <property type="entry name" value="G_ENGA"/>
    <property type="match status" value="2"/>
</dbReference>